<organism>
    <name type="scientific">Rhodospirillum centenum (strain ATCC 51521 / SW)</name>
    <dbReference type="NCBI Taxonomy" id="414684"/>
    <lineage>
        <taxon>Bacteria</taxon>
        <taxon>Pseudomonadati</taxon>
        <taxon>Pseudomonadota</taxon>
        <taxon>Alphaproteobacteria</taxon>
        <taxon>Rhodospirillales</taxon>
        <taxon>Rhodospirillaceae</taxon>
        <taxon>Rhodospirillum</taxon>
    </lineage>
</organism>
<proteinExistence type="inferred from homology"/>
<gene>
    <name evidence="1" type="primary">nrdR</name>
    <name type="ordered locus">RC1_1341</name>
</gene>
<dbReference type="EMBL" id="CP000613">
    <property type="protein sequence ID" value="ACI98745.1"/>
    <property type="molecule type" value="Genomic_DNA"/>
</dbReference>
<dbReference type="RefSeq" id="WP_012566532.1">
    <property type="nucleotide sequence ID" value="NC_011420.2"/>
</dbReference>
<dbReference type="SMR" id="B6IMS9"/>
<dbReference type="STRING" id="414684.RC1_1341"/>
<dbReference type="KEGG" id="rce:RC1_1341"/>
<dbReference type="eggNOG" id="COG1327">
    <property type="taxonomic scope" value="Bacteria"/>
</dbReference>
<dbReference type="HOGENOM" id="CLU_108412_0_1_5"/>
<dbReference type="OrthoDB" id="9807461at2"/>
<dbReference type="Proteomes" id="UP000001591">
    <property type="component" value="Chromosome"/>
</dbReference>
<dbReference type="GO" id="GO:0005524">
    <property type="term" value="F:ATP binding"/>
    <property type="evidence" value="ECO:0007669"/>
    <property type="project" value="UniProtKB-KW"/>
</dbReference>
<dbReference type="GO" id="GO:0003677">
    <property type="term" value="F:DNA binding"/>
    <property type="evidence" value="ECO:0007669"/>
    <property type="project" value="UniProtKB-KW"/>
</dbReference>
<dbReference type="GO" id="GO:0008270">
    <property type="term" value="F:zinc ion binding"/>
    <property type="evidence" value="ECO:0007669"/>
    <property type="project" value="UniProtKB-UniRule"/>
</dbReference>
<dbReference type="GO" id="GO:0045892">
    <property type="term" value="P:negative regulation of DNA-templated transcription"/>
    <property type="evidence" value="ECO:0007669"/>
    <property type="project" value="UniProtKB-UniRule"/>
</dbReference>
<dbReference type="HAMAP" id="MF_00440">
    <property type="entry name" value="NrdR"/>
    <property type="match status" value="1"/>
</dbReference>
<dbReference type="InterPro" id="IPR005144">
    <property type="entry name" value="ATP-cone_dom"/>
</dbReference>
<dbReference type="InterPro" id="IPR055173">
    <property type="entry name" value="NrdR-like_N"/>
</dbReference>
<dbReference type="InterPro" id="IPR003796">
    <property type="entry name" value="RNR_NrdR-like"/>
</dbReference>
<dbReference type="NCBIfam" id="TIGR00244">
    <property type="entry name" value="transcriptional regulator NrdR"/>
    <property type="match status" value="1"/>
</dbReference>
<dbReference type="PANTHER" id="PTHR30455">
    <property type="entry name" value="TRANSCRIPTIONAL REPRESSOR NRDR"/>
    <property type="match status" value="1"/>
</dbReference>
<dbReference type="PANTHER" id="PTHR30455:SF2">
    <property type="entry name" value="TRANSCRIPTIONAL REPRESSOR NRDR"/>
    <property type="match status" value="1"/>
</dbReference>
<dbReference type="Pfam" id="PF03477">
    <property type="entry name" value="ATP-cone"/>
    <property type="match status" value="1"/>
</dbReference>
<dbReference type="Pfam" id="PF22811">
    <property type="entry name" value="Zn_ribbon_NrdR"/>
    <property type="match status" value="1"/>
</dbReference>
<dbReference type="PROSITE" id="PS51161">
    <property type="entry name" value="ATP_CONE"/>
    <property type="match status" value="1"/>
</dbReference>
<keyword id="KW-0067">ATP-binding</keyword>
<keyword id="KW-0238">DNA-binding</keyword>
<keyword id="KW-0479">Metal-binding</keyword>
<keyword id="KW-0547">Nucleotide-binding</keyword>
<keyword id="KW-1185">Reference proteome</keyword>
<keyword id="KW-0678">Repressor</keyword>
<keyword id="KW-0804">Transcription</keyword>
<keyword id="KW-0805">Transcription regulation</keyword>
<keyword id="KW-0862">Zinc</keyword>
<keyword id="KW-0863">Zinc-finger</keyword>
<reference key="1">
    <citation type="submission" date="2007-03" db="EMBL/GenBank/DDBJ databases">
        <title>Genome sequence of Rhodospirillum centenum.</title>
        <authorList>
            <person name="Touchman J.W."/>
            <person name="Bauer C."/>
            <person name="Blankenship R.E."/>
        </authorList>
    </citation>
    <scope>NUCLEOTIDE SEQUENCE [LARGE SCALE GENOMIC DNA]</scope>
    <source>
        <strain>ATCC 51521 / SW</strain>
    </source>
</reference>
<comment type="function">
    <text evidence="1">Negatively regulates transcription of bacterial ribonucleotide reductase nrd genes and operons by binding to NrdR-boxes.</text>
</comment>
<comment type="cofactor">
    <cofactor evidence="1">
        <name>Zn(2+)</name>
        <dbReference type="ChEBI" id="CHEBI:29105"/>
    </cofactor>
    <text evidence="1">Binds 1 zinc ion.</text>
</comment>
<comment type="similarity">
    <text evidence="1">Belongs to the NrdR family.</text>
</comment>
<feature type="chain" id="PRO_1000124538" description="Transcriptional repressor NrdR">
    <location>
        <begin position="1"/>
        <end position="154"/>
    </location>
</feature>
<feature type="domain" description="ATP-cone" evidence="1">
    <location>
        <begin position="49"/>
        <end position="139"/>
    </location>
</feature>
<feature type="zinc finger region" evidence="1">
    <location>
        <begin position="3"/>
        <end position="34"/>
    </location>
</feature>
<feature type="region of interest" description="Disordered" evidence="2">
    <location>
        <begin position="1"/>
        <end position="22"/>
    </location>
</feature>
<feature type="compositionally biased region" description="Basic and acidic residues" evidence="2">
    <location>
        <begin position="11"/>
        <end position="22"/>
    </location>
</feature>
<evidence type="ECO:0000255" key="1">
    <source>
        <dbReference type="HAMAP-Rule" id="MF_00440"/>
    </source>
</evidence>
<evidence type="ECO:0000256" key="2">
    <source>
        <dbReference type="SAM" id="MobiDB-lite"/>
    </source>
</evidence>
<protein>
    <recommendedName>
        <fullName evidence="1">Transcriptional repressor NrdR</fullName>
    </recommendedName>
</protein>
<name>NRDR_RHOCS</name>
<sequence>MRCPFCGNDDTQVKDSRPTEDNSAIRRRRFCPACGARFTTFERVQLRELTVVKSGGSREPFDREKLLRSMRIALRKRPVDADRIDRVVNSIVRQLESSGETEIPSSQIGEMVMVHLGTLDKVAYVRYASVYKDFREVTDFNQFVETLRTDAPAG</sequence>
<accession>B6IMS9</accession>